<keyword id="KW-0002">3D-structure</keyword>
<keyword id="KW-0067">ATP-binding</keyword>
<keyword id="KW-0997">Cell inner membrane</keyword>
<keyword id="KW-1003">Cell membrane</keyword>
<keyword id="KW-0184">Conjugation</keyword>
<keyword id="KW-0472">Membrane</keyword>
<keyword id="KW-0547">Nucleotide-binding</keyword>
<keyword id="KW-0614">Plasmid</keyword>
<keyword id="KW-0812">Transmembrane</keyword>
<keyword id="KW-1133">Transmembrane helix</keyword>
<comment type="function">
    <text evidence="7">Conjugative DNA transfer (CDT) is the unidirectional transfer of ssDNA plasmid from a donor to a recipient cell. It is the central mechanism by which antibiotic resistance and virulence factors are propagated in bacterial populations. Couples the transferosome to a type IV secretion system. Probably forms a pore through which single-stranded plasmid DNA is transferred to the secretion system. The last 37 residues are important for determining plasmid specificity and transfer efficiency, with additional specificity conferred by the TraD-TraM pair.</text>
</comment>
<comment type="subunit">
    <text evidence="4 5 6">Interacts with relaxosome component TraM. May form a hexamer in the membrane.</text>
</comment>
<comment type="subcellular location">
    <subcellularLocation>
        <location evidence="6">Cell inner membrane</location>
        <topology evidence="6">Multi-pass membrane protein</topology>
    </subcellularLocation>
</comment>
<comment type="similarity">
    <text evidence="8">Belongs to the TrwB coupling protein family.</text>
</comment>
<comment type="sequence caution" evidence="8">
    <conflict type="erroneous termination">
        <sequence resource="EMBL-CDS" id="AAC44181"/>
    </conflict>
    <text>Extended C-terminus.</text>
</comment>
<comment type="sequence caution" evidence="8">
    <conflict type="frameshift">
        <sequence resource="EMBL-CDS" id="CAA30013"/>
    </conflict>
</comment>
<reference key="1">
    <citation type="journal article" date="1989" name="Gene">
        <title>Nucleotide sequence of the traD region in the Escherichia coli F sex factor.</title>
        <authorList>
            <person name="Jalajakumari M.B."/>
            <person name="Manning P.A."/>
        </authorList>
    </citation>
    <scope>NUCLEOTIDE SEQUENCE [GENOMIC DNA]</scope>
    <source>
        <strain>K12</strain>
        <plasmid>F</plasmid>
    </source>
</reference>
<reference key="2">
    <citation type="journal article" date="1994" name="Microbiol. Rev.">
        <title>Analysis of the sequence and gene products of the transfer region of the F sex factor.</title>
        <authorList>
            <person name="Frost L.S."/>
            <person name="Ippen-Ihler K."/>
            <person name="Skurray R.A."/>
        </authorList>
    </citation>
    <scope>NUCLEOTIDE SEQUENCE [GENOMIC DNA]</scope>
    <source>
        <plasmid>F</plasmid>
    </source>
</reference>
<reference key="3">
    <citation type="journal article" date="1999" name="J. Bacteriol.">
        <title>Comparison of proteins involved in pilus synthesis and mating pair stabilization from the related plasmids F and R100-1: insights into the mechanism of conjugation.</title>
        <authorList>
            <person name="Anthony K.G."/>
            <person name="Klimke W.A."/>
            <person name="Manchak J."/>
            <person name="Frost L.S."/>
        </authorList>
    </citation>
    <scope>SEQUENCE REVISION TO 190; 269-270 AND 321-325</scope>
    <scope>VARIANT LEU-396</scope>
    <source>
        <plasmid>F</plasmid>
    </source>
</reference>
<reference key="4">
    <citation type="submission" date="1998-10" db="EMBL/GenBank/DDBJ databases">
        <authorList>
            <person name="Krause S."/>
            <person name="Lanka E."/>
        </authorList>
    </citation>
    <scope>NUCLEOTIDE SEQUENCE [GENOMIC DNA]</scope>
    <source>
        <plasmid>F</plasmid>
    </source>
</reference>
<reference key="5">
    <citation type="submission" date="2000-04" db="EMBL/GenBank/DDBJ databases">
        <title>Complete nucleotide sequence of the F plasmid: its implications for organization and diversification of plasmid genomes.</title>
        <authorList>
            <person name="Shimizu H."/>
            <person name="Saitoh Y."/>
            <person name="Suda Y."/>
            <person name="Uehara K."/>
            <person name="Sampei G."/>
            <person name="Mizobuchi K."/>
        </authorList>
    </citation>
    <scope>NUCLEOTIDE SEQUENCE [LARGE SCALE GENOMIC DNA]</scope>
    <source>
        <strain>K12 / CR63</strain>
        <plasmid>F</plasmid>
    </source>
</reference>
<reference key="6">
    <citation type="submission" date="2002-10" db="EMBL/GenBank/DDBJ databases">
        <authorList>
            <person name="Zienkiewicz M."/>
            <person name="Kern-Zdanowicz I."/>
            <person name="Golebiewski M."/>
            <person name="Ceglowski P."/>
        </authorList>
    </citation>
    <scope>NUCLEOTIDE SEQUENCE [GENOMIC DNA]</scope>
    <source>
        <plasmid>p1658/97</plasmid>
    </source>
</reference>
<reference key="7">
    <citation type="journal article" date="1987" name="J. Mol. Biol.">
        <title>Surface exclusion genes traS and traT of the F sex factor of Escherichia coli K-12. Determination of the nucleotide sequence and promoter and terminator activities.</title>
        <authorList>
            <person name="Jalajakumari M.B."/>
            <person name="Guidolin A."/>
            <person name="Buhj H.J."/>
            <person name="Manning P.A."/>
        </authorList>
    </citation>
    <scope>NUCLEOTIDE SEQUENCE [GENOMIC DNA] OF 1-34</scope>
    <source>
        <strain>K12</strain>
        <plasmid>F</plasmid>
    </source>
</reference>
<reference key="8">
    <citation type="journal article" date="1990" name="J. Mol. Biol.">
        <title>Nucleotide sequence of the promoter-distal region of the tra operon of plasmid R100, including traI (DNA helicase I) and traD genes.</title>
        <authorList>
            <person name="Yoshioka Y."/>
            <person name="Fujita Y."/>
            <person name="Ohtsubo E."/>
        </authorList>
    </citation>
    <scope>NUCLEOTIDE SEQUENCE [GENOMIC DNA] OF 1-102 AND 665-717</scope>
    <source>
        <plasmid>F</plasmid>
    </source>
</reference>
<reference key="9">
    <citation type="journal article" date="1990" name="J. Bacteriol.">
        <title>Nucleotide sequence of the traI (helicase I) gene from the sex factor F.</title>
        <authorList>
            <person name="Bradshaw H.D. Jr."/>
            <person name="Traxler B.A."/>
            <person name="Minkley E.G. Jr."/>
            <person name="Nester E.W."/>
            <person name="Gordon M.P."/>
        </authorList>
    </citation>
    <scope>NUCLEOTIDE SEQUENCE [GENOMIC DNA] OF 462-717</scope>
    <source>
        <plasmid>F</plasmid>
    </source>
</reference>
<reference key="10">
    <citation type="journal article" date="1992" name="J. Biol. Chem.">
        <title>Purification and properties of the F sex factor TraD protein, an inner membrane conjugal transfer protein.</title>
        <authorList>
            <person name="Panicker M.M."/>
            <person name="Minkley E.G. Jr."/>
        </authorList>
    </citation>
    <scope>CHARACTERIZATION</scope>
    <source>
        <plasmid>F</plasmid>
    </source>
</reference>
<reference key="11">
    <citation type="journal article" date="1997" name="J. Bacteriol.">
        <title>The cytoplasmic DNA-binding protein TraM binds to the inner membrane protein TraD in vitro.</title>
        <authorList>
            <person name="Disque-Kochem C."/>
            <person name="Dreiseikelmann B."/>
        </authorList>
    </citation>
    <scope>INTERACTION WITH TRAM</scope>
    <scope>SUBCELLULAR LOCATION</scope>
    <source>
        <plasmid>F</plasmid>
    </source>
</reference>
<reference key="12">
    <citation type="journal article" date="1998" name="J. Bacteriol.">
        <title>The carboxyl terminus of protein TraD adds specificity and efficiency to F-plasmid conjugative transfer.</title>
        <authorList>
            <person name="Sastre J.I."/>
            <person name="Cabezon E."/>
            <person name="de la Cruz F."/>
        </authorList>
    </citation>
    <scope>FUNCTION</scope>
    <scope>MUTAGENESIS OF 681-TRP--PHE-717</scope>
    <source>
        <plasmid>F</plasmid>
    </source>
</reference>
<reference key="13">
    <citation type="journal article" date="1999" name="J. Bacteriol.">
        <title>Analysis of F factor TraD membrane topology by use of gene fusions and trypsin-sensitive insertions.</title>
        <authorList>
            <person name="Lee M.H."/>
            <person name="Kosuk N."/>
            <person name="Bailey J."/>
            <person name="Traxler B."/>
            <person name="Manoil C."/>
        </authorList>
    </citation>
    <scope>TOPOLOGY</scope>
    <source>
        <plasmid>F</plasmid>
    </source>
</reference>
<reference key="14">
    <citation type="journal article" date="2005" name="J. Bacteriol.">
        <title>Mutations in the C-terminal region of TraM provide evidence for in vivo TraM-TraD interactions during F-plasmid conjugation.</title>
        <authorList>
            <person name="Lu J."/>
            <person name="Frost L.S."/>
        </authorList>
    </citation>
    <scope>INTERACTION WITH TRAM</scope>
    <source>
        <plasmid>F</plasmid>
    </source>
</reference>
<reference key="15">
    <citation type="journal article" date="2008" name="Mol. Microbiol.">
        <title>Structural basis of specific TraD-TraM recognition during F plasmid-mediated bacterial conjugation.</title>
        <authorList>
            <person name="Lu J."/>
            <person name="Wong J.J."/>
            <person name="Edwards R.A."/>
            <person name="Manchak J."/>
            <person name="Frost L.S."/>
            <person name="Glover J.N."/>
        </authorList>
    </citation>
    <scope>X-RAY CRYSTALLOGRAPHY (2.55 ANGSTROMS) OF 708-717 IN COMPLEX WITH C-TERMINUS OF TRAM</scope>
    <scope>MUTAGENESIS OF 710-ASP--PHE-717; GLU-712; ASP-715 AND PHE-717</scope>
    <source>
        <plasmid>F</plasmid>
    </source>
</reference>
<evidence type="ECO:0000255" key="1"/>
<evidence type="ECO:0000256" key="2">
    <source>
        <dbReference type="SAM" id="MobiDB-lite"/>
    </source>
</evidence>
<evidence type="ECO:0000269" key="3">
    <source>
    </source>
</evidence>
<evidence type="ECO:0000269" key="4">
    <source>
    </source>
</evidence>
<evidence type="ECO:0000269" key="5">
    <source>
    </source>
</evidence>
<evidence type="ECO:0000269" key="6">
    <source>
    </source>
</evidence>
<evidence type="ECO:0000269" key="7">
    <source>
    </source>
</evidence>
<evidence type="ECO:0000305" key="8"/>
<evidence type="ECO:0000305" key="9">
    <source>
    </source>
</evidence>
<feature type="chain" id="PRO_0000068448" description="Coupling protein TraD">
    <location>
        <begin position="1"/>
        <end position="717"/>
    </location>
</feature>
<feature type="topological domain" description="Cytoplasmic" evidence="9">
    <location>
        <begin position="1"/>
        <end position="27"/>
    </location>
</feature>
<feature type="transmembrane region" description="Helical" evidence="8">
    <location>
        <begin position="28"/>
        <end position="47"/>
    </location>
</feature>
<feature type="topological domain" description="Periplasmic" evidence="9">
    <location>
        <begin position="48"/>
        <end position="104"/>
    </location>
</feature>
<feature type="transmembrane region" description="Helical" evidence="8">
    <location>
        <begin position="105"/>
        <end position="130"/>
    </location>
</feature>
<feature type="topological domain" description="Cytoplasmic" evidence="9">
    <location>
        <begin position="131"/>
        <end position="717"/>
    </location>
</feature>
<feature type="region of interest" description="Disordered" evidence="2">
    <location>
        <begin position="614"/>
        <end position="639"/>
    </location>
</feature>
<feature type="region of interest" description="Disordered" evidence="2">
    <location>
        <begin position="650"/>
        <end position="669"/>
    </location>
</feature>
<feature type="binding site" evidence="1">
    <location>
        <begin position="192"/>
        <end position="199"/>
    </location>
    <ligand>
        <name>ATP</name>
        <dbReference type="ChEBI" id="CHEBI:30616"/>
    </ligand>
</feature>
<feature type="sequence variant" description="In traD39; temperature-sensitive." evidence="3">
    <original>P</original>
    <variation>L</variation>
    <location>
        <position position="396"/>
    </location>
</feature>
<feature type="mutagenesis site" description="1000-fold increase in the transfer frequency of plasmids R388 and RSF1010, a 10,000-fold reduction in F plasmid transfer frequency." evidence="7">
    <original>WQQENHPDIQQQMQRREEVNINVHRERGEDVEPGDDF</original>
    <variation>CNRKIIRTSSSRCSVVKR</variation>
    <location>
        <begin position="681"/>
        <end position="717"/>
    </location>
</feature>
<feature type="mutagenesis site" description="Loss of interaction with TraM, 1000-fold decrease in conjugation." evidence="5">
    <location>
        <begin position="710"/>
        <end position="717"/>
    </location>
</feature>
<feature type="mutagenesis site" description="No change in conjugation efficiency. Partially rescues a TraM K-99 mutation." evidence="5">
    <original>E</original>
    <variation>K</variation>
    <location>
        <position position="712"/>
    </location>
</feature>
<feature type="mutagenesis site" description="10-fold decrease in conjugation efficiency." evidence="5">
    <original>D</original>
    <variation>K</variation>
    <location>
        <position position="715"/>
    </location>
</feature>
<feature type="mutagenesis site" description="5000-fold decrease in conjugation efficiency." evidence="5">
    <original>F</original>
    <variation>A</variation>
    <location>
        <position position="717"/>
    </location>
</feature>
<feature type="mutagenesis site" description="1000-fold decrease in conjugation efficiency." evidence="5">
    <original>F</original>
    <variation>FG</variation>
    <location>
        <position position="717"/>
    </location>
</feature>
<feature type="sequence conflict" description="In Ref. 1; AAA83928." evidence="8" ref="1">
    <original>IRMFSQIANIMLYCLFIFFWILVGLVLWIKISWQTFVNGCIYWW</original>
    <variation>YPHVQPDRQYHALLPVYFFLDTRWSGFMDKISWTDVVNGLFTV</variation>
    <location>
        <begin position="19"/>
        <end position="62"/>
    </location>
</feature>
<feature type="sequence conflict" description="In Ref. 1; AAA83928." evidence="8" ref="1">
    <original>L</original>
    <variation>R</variation>
    <location>
        <position position="190"/>
    </location>
</feature>
<feature type="sequence conflict" description="In Ref. 1; AAA83928." evidence="8" ref="1">
    <original>PM</original>
    <variation>RD</variation>
    <location>
        <begin position="269"/>
        <end position="270"/>
    </location>
</feature>
<feature type="sequence conflict" description="In Ref. 1; AAA83928." evidence="8" ref="1">
    <original>RNSPA</original>
    <variation>VIHRQ</variation>
    <location>
        <begin position="321"/>
        <end position="325"/>
    </location>
</feature>
<name>TRAD1_ECOLI</name>
<accession>P09130</accession>
<accession>O87742</accession>
<organism>
    <name type="scientific">Escherichia coli (strain K12)</name>
    <dbReference type="NCBI Taxonomy" id="83333"/>
    <lineage>
        <taxon>Bacteria</taxon>
        <taxon>Pseudomonadati</taxon>
        <taxon>Pseudomonadota</taxon>
        <taxon>Gammaproteobacteria</taxon>
        <taxon>Enterobacterales</taxon>
        <taxon>Enterobacteriaceae</taxon>
        <taxon>Escherichia</taxon>
    </lineage>
</organism>
<protein>
    <recommendedName>
        <fullName>Coupling protein TraD</fullName>
    </recommendedName>
    <alternativeName>
        <fullName>DNA transport protein TraD</fullName>
    </alternativeName>
</protein>
<sequence length="717" mass="81489">MSFNAKDMTQGGQIASMRIRMFSQIANIMLYCLFIFFWILVGLVLWIKISWQTFVNGCIYWWCTTLEGMRDLIKSQPVYEIQYYGKTFRMNAAQVLHDKYMIWCSEQLWSAFVLAAVVALVICLITFFVVSWILGRQGKQQSENEVTGGRQLTDNPKDVARMLKKDGKDSDIRIGDLPIIRDSEIQNFCLHGTVGAGKSEVIRRLANYARQRGDMVVIYDRSGEFVKSYYDPSIDKILNPLDARCAAWDLWKECLTQPDFDNTANTLIPMGTKEDPFWQGSGRTIFAEAAYLMRNDPNRSYSKLVDTLLSIKIEKLRTYLRNSPAANLVEEKIEKTAISIRAVLTNYVKAIRYLQGIEHNGEPFTIRDWMRGVREDQKNGWLFISSNADTHASLKPVISMWLSIAIRGLLAMGENRNRRVWFFCDELPTLHKLPDLVEILPEARKFGGCYVFGIQSYAQLEDIYGEKAAASLFDVMNTRAFFRSPSHKIAEFAAGEIGEKEHLKASEQYSYGADPVRDGVSTGKDMERQTLVSYSDIQSLPDLTCYVTLPGPYPAVKLSLKYQTRPKVAPEFIPRDINPEMENRLSAVLAAREAEGRQMASLFEPDVPEVVSGEDVTQAEQPQQPVSPAINDKKSDSGVNVPAGGIEQELKMKPEEEMEQQLPPGISESGEVVDMAAYEAWQQENHPDIQQQMQRREEVNINVHRERGEDVEPGDDF</sequence>
<proteinExistence type="evidence at protein level"/>
<gene>
    <name type="primary">traD</name>
    <name type="ordered locus">ECOK12F102</name>
</gene>
<geneLocation type="plasmid">
    <name>F</name>
</geneLocation>
<geneLocation type="plasmid">
    <name>p1658/97</name>
</geneLocation>
<dbReference type="EMBL" id="M29254">
    <property type="protein sequence ID" value="AAA83928.1"/>
    <property type="molecule type" value="Genomic_DNA"/>
</dbReference>
<dbReference type="EMBL" id="U01159">
    <property type="protein sequence ID" value="AAC44181.2"/>
    <property type="status" value="ALT_TERM"/>
    <property type="molecule type" value="Genomic_DNA"/>
</dbReference>
<dbReference type="EMBL" id="AJ011707">
    <property type="protein sequence ID" value="CAA09749.1"/>
    <property type="molecule type" value="Genomic_DNA"/>
</dbReference>
<dbReference type="EMBL" id="AP001918">
    <property type="protein sequence ID" value="BAA97972.1"/>
    <property type="molecule type" value="Genomic_DNA"/>
</dbReference>
<dbReference type="EMBL" id="AF550679">
    <property type="protein sequence ID" value="AAO49544.1"/>
    <property type="molecule type" value="Genomic_DNA"/>
</dbReference>
<dbReference type="EMBL" id="X06915">
    <property type="protein sequence ID" value="CAA30013.1"/>
    <property type="status" value="ALT_FRAME"/>
    <property type="molecule type" value="Genomic_DNA"/>
</dbReference>
<dbReference type="EMBL" id="X57428">
    <property type="protein sequence ID" value="CAA40674.1"/>
    <property type="molecule type" value="Genomic_DNA"/>
</dbReference>
<dbReference type="EMBL" id="X57431">
    <property type="protein sequence ID" value="CAA40678.1"/>
    <property type="molecule type" value="Genomic_DNA"/>
</dbReference>
<dbReference type="EMBL" id="M54796">
    <property type="protein sequence ID" value="AAA98083.1"/>
    <property type="molecule type" value="Genomic_DNA"/>
</dbReference>
<dbReference type="PIR" id="JS0293">
    <property type="entry name" value="BVECAD"/>
</dbReference>
<dbReference type="RefSeq" id="NP_061481.1">
    <property type="nucleotide sequence ID" value="NC_002483.1"/>
</dbReference>
<dbReference type="RefSeq" id="NP_862947.1">
    <property type="nucleotide sequence ID" value="NC_004998.1"/>
</dbReference>
<dbReference type="RefSeq" id="WP_000009350.1">
    <property type="nucleotide sequence ID" value="NZ_JACEFS010000047.1"/>
</dbReference>
<dbReference type="RefSeq" id="YP_009060132.1">
    <property type="nucleotide sequence ID" value="NC_024956.1"/>
</dbReference>
<dbReference type="RefSeq" id="YP_009062862.1">
    <property type="nucleotide sequence ID" value="NC_025014.1"/>
</dbReference>
<dbReference type="RefSeq" id="YP_009068320.1">
    <property type="nucleotide sequence ID" value="NC_025139.1"/>
</dbReference>
<dbReference type="RefSeq" id="YP_009070586.1">
    <property type="nucleotide sequence ID" value="NC_025175.1"/>
</dbReference>
<dbReference type="PDB" id="3D8A">
    <property type="method" value="X-ray"/>
    <property type="resolution" value="2.55 A"/>
    <property type="chains" value="S/T/U/V/W/X/Y/Z=708-717"/>
</dbReference>
<dbReference type="PDBsum" id="3D8A"/>
<dbReference type="SMR" id="P09130"/>
<dbReference type="DIP" id="DIP-27652N"/>
<dbReference type="KEGG" id="ecoc:C3026_24610"/>
<dbReference type="PATRIC" id="fig|83333.107.peg.610"/>
<dbReference type="OrthoDB" id="9803543at2"/>
<dbReference type="EvolutionaryTrace" id="P09130"/>
<dbReference type="PRO" id="PR:P09130"/>
<dbReference type="GO" id="GO:0005886">
    <property type="term" value="C:plasma membrane"/>
    <property type="evidence" value="ECO:0007669"/>
    <property type="project" value="UniProtKB-SubCell"/>
</dbReference>
<dbReference type="GO" id="GO:0005524">
    <property type="term" value="F:ATP binding"/>
    <property type="evidence" value="ECO:0007669"/>
    <property type="project" value="UniProtKB-KW"/>
</dbReference>
<dbReference type="GO" id="GO:0009291">
    <property type="term" value="P:unidirectional conjugation"/>
    <property type="evidence" value="ECO:0000315"/>
    <property type="project" value="CACAO"/>
</dbReference>
<dbReference type="CDD" id="cd01127">
    <property type="entry name" value="TrwB_TraG_TraD_VirD4"/>
    <property type="match status" value="1"/>
</dbReference>
<dbReference type="Gene3D" id="1.10.8.80">
    <property type="entry name" value="Magnesium chelatase subunit I, C-Terminal domain"/>
    <property type="match status" value="1"/>
</dbReference>
<dbReference type="Gene3D" id="3.40.50.300">
    <property type="entry name" value="P-loop containing nucleotide triphosphate hydrolases"/>
    <property type="match status" value="1"/>
</dbReference>
<dbReference type="InterPro" id="IPR027417">
    <property type="entry name" value="P-loop_NTPase"/>
</dbReference>
<dbReference type="InterPro" id="IPR051539">
    <property type="entry name" value="T4SS-coupling_protein"/>
</dbReference>
<dbReference type="InterPro" id="IPR014128">
    <property type="entry name" value="T4SS_TraD"/>
</dbReference>
<dbReference type="InterPro" id="IPR019476">
    <property type="entry name" value="T4SS_TraD_DNA-bd"/>
</dbReference>
<dbReference type="InterPro" id="IPR022585">
    <property type="entry name" value="TraD_N"/>
</dbReference>
<dbReference type="NCBIfam" id="NF010254">
    <property type="entry name" value="PRK13700.1"/>
    <property type="match status" value="1"/>
</dbReference>
<dbReference type="NCBIfam" id="TIGR02759">
    <property type="entry name" value="TraD_Ftype"/>
    <property type="match status" value="1"/>
</dbReference>
<dbReference type="PANTHER" id="PTHR37937">
    <property type="entry name" value="CONJUGATIVE TRANSFER: DNA TRANSPORT"/>
    <property type="match status" value="1"/>
</dbReference>
<dbReference type="PANTHER" id="PTHR37937:SF1">
    <property type="entry name" value="CONJUGATIVE TRANSFER: DNA TRANSPORT"/>
    <property type="match status" value="1"/>
</dbReference>
<dbReference type="Pfam" id="PF12615">
    <property type="entry name" value="TraD_N"/>
    <property type="match status" value="1"/>
</dbReference>
<dbReference type="Pfam" id="PF10412">
    <property type="entry name" value="TrwB_AAD_bind"/>
    <property type="match status" value="1"/>
</dbReference>
<dbReference type="SUPFAM" id="SSF52540">
    <property type="entry name" value="P-loop containing nucleoside triphosphate hydrolases"/>
    <property type="match status" value="1"/>
</dbReference>